<accession>P64037</accession>
<accession>Q8XFX2</accession>
<proteinExistence type="inferred from homology"/>
<name>EFP_SALTI</name>
<protein>
    <recommendedName>
        <fullName evidence="2">Elongation factor P</fullName>
        <shortName evidence="2">EF-P</shortName>
    </recommendedName>
</protein>
<reference key="1">
    <citation type="journal article" date="2001" name="Nature">
        <title>Complete genome sequence of a multiple drug resistant Salmonella enterica serovar Typhi CT18.</title>
        <authorList>
            <person name="Parkhill J."/>
            <person name="Dougan G."/>
            <person name="James K.D."/>
            <person name="Thomson N.R."/>
            <person name="Pickard D."/>
            <person name="Wain J."/>
            <person name="Churcher C.M."/>
            <person name="Mungall K.L."/>
            <person name="Bentley S.D."/>
            <person name="Holden M.T.G."/>
            <person name="Sebaihia M."/>
            <person name="Baker S."/>
            <person name="Basham D."/>
            <person name="Brooks K."/>
            <person name="Chillingworth T."/>
            <person name="Connerton P."/>
            <person name="Cronin A."/>
            <person name="Davis P."/>
            <person name="Davies R.M."/>
            <person name="Dowd L."/>
            <person name="White N."/>
            <person name="Farrar J."/>
            <person name="Feltwell T."/>
            <person name="Hamlin N."/>
            <person name="Haque A."/>
            <person name="Hien T.T."/>
            <person name="Holroyd S."/>
            <person name="Jagels K."/>
            <person name="Krogh A."/>
            <person name="Larsen T.S."/>
            <person name="Leather S."/>
            <person name="Moule S."/>
            <person name="O'Gaora P."/>
            <person name="Parry C."/>
            <person name="Quail M.A."/>
            <person name="Rutherford K.M."/>
            <person name="Simmonds M."/>
            <person name="Skelton J."/>
            <person name="Stevens K."/>
            <person name="Whitehead S."/>
            <person name="Barrell B.G."/>
        </authorList>
    </citation>
    <scope>NUCLEOTIDE SEQUENCE [LARGE SCALE GENOMIC DNA]</scope>
    <source>
        <strain>CT18</strain>
    </source>
</reference>
<reference key="2">
    <citation type="journal article" date="2003" name="J. Bacteriol.">
        <title>Comparative genomics of Salmonella enterica serovar Typhi strains Ty2 and CT18.</title>
        <authorList>
            <person name="Deng W."/>
            <person name="Liou S.-R."/>
            <person name="Plunkett G. III"/>
            <person name="Mayhew G.F."/>
            <person name="Rose D.J."/>
            <person name="Burland V."/>
            <person name="Kodoyianni V."/>
            <person name="Schwartz D.C."/>
            <person name="Blattner F.R."/>
        </authorList>
    </citation>
    <scope>NUCLEOTIDE SEQUENCE [LARGE SCALE GENOMIC DNA]</scope>
    <source>
        <strain>ATCC 700931 / Ty2</strain>
    </source>
</reference>
<evidence type="ECO:0000250" key="1"/>
<evidence type="ECO:0000255" key="2">
    <source>
        <dbReference type="HAMAP-Rule" id="MF_00141"/>
    </source>
</evidence>
<sequence>MATYYSNDFRSGLKIMLDGEPYAVESSEFVKPGKGQAFARVKLRRLLTGTRVEKTFKSTDSAEGADVVDMNLTYLYNDGEFWHFMNNETFEQLSADAKAIGDNAKWLLDQAECIVTLWNGQPISVTPPNFVELEIVDTDPGLKGDTAGTGGKPATLSTGAVVKVPLFVQIGEVIKVDTRSGEYVSRVK</sequence>
<gene>
    <name evidence="2" type="primary">efp</name>
    <name type="ordered locus">STY4694</name>
    <name type="ordered locus">t4386</name>
</gene>
<comment type="function">
    <text evidence="2">Involved in peptide bond synthesis. Alleviates ribosome stalling that occurs when 3 or more consecutive Pro residues or the sequence PPG is present in a protein, possibly by augmenting the peptidyl transferase activity of the ribosome. Modification of Lys-34 is required for alleviation.</text>
</comment>
<comment type="pathway">
    <text evidence="2">Protein biosynthesis; polypeptide chain elongation.</text>
</comment>
<comment type="subcellular location">
    <subcellularLocation>
        <location evidence="2">Cytoplasm</location>
    </subcellularLocation>
</comment>
<comment type="PTM">
    <text evidence="2">Is beta-lysylated on the epsilon-amino group of Lys-34 by the combined action of EpmA and EpmB, and then hydroxylated on the C5 position of the same residue by EpmC. Lysylation is critical for the stimulatory effect of EF-P on peptide-bond formation. The lysylation moiety would extend toward the peptidyltransferase center and stabilize the terminal 3-CCA end of the tRNA. The hydroxylation of the C5 position on Lys-34 would allow additional potential stabilizing hydrogen-bond interactions with the P-tRNA.</text>
</comment>
<comment type="similarity">
    <text evidence="2">Belongs to the elongation factor P family.</text>
</comment>
<dbReference type="EMBL" id="AL513382">
    <property type="protein sequence ID" value="CAD06814.1"/>
    <property type="molecule type" value="Genomic_DNA"/>
</dbReference>
<dbReference type="EMBL" id="AE014613">
    <property type="protein sequence ID" value="AAO71837.1"/>
    <property type="molecule type" value="Genomic_DNA"/>
</dbReference>
<dbReference type="RefSeq" id="NP_458773.1">
    <property type="nucleotide sequence ID" value="NC_003198.1"/>
</dbReference>
<dbReference type="RefSeq" id="WP_000257282.1">
    <property type="nucleotide sequence ID" value="NZ_WSUR01000012.1"/>
</dbReference>
<dbReference type="SMR" id="P64037"/>
<dbReference type="STRING" id="220341.gene:17588512"/>
<dbReference type="GeneID" id="66758562"/>
<dbReference type="KEGG" id="stt:t4386"/>
<dbReference type="KEGG" id="sty:STY4694"/>
<dbReference type="PATRIC" id="fig|220341.7.peg.4794"/>
<dbReference type="eggNOG" id="COG0231">
    <property type="taxonomic scope" value="Bacteria"/>
</dbReference>
<dbReference type="HOGENOM" id="CLU_074944_0_0_6"/>
<dbReference type="OMA" id="WSVVEFQ"/>
<dbReference type="OrthoDB" id="9801844at2"/>
<dbReference type="UniPathway" id="UPA00345"/>
<dbReference type="Proteomes" id="UP000000541">
    <property type="component" value="Chromosome"/>
</dbReference>
<dbReference type="Proteomes" id="UP000002670">
    <property type="component" value="Chromosome"/>
</dbReference>
<dbReference type="GO" id="GO:0005829">
    <property type="term" value="C:cytosol"/>
    <property type="evidence" value="ECO:0007669"/>
    <property type="project" value="UniProtKB-ARBA"/>
</dbReference>
<dbReference type="GO" id="GO:0003746">
    <property type="term" value="F:translation elongation factor activity"/>
    <property type="evidence" value="ECO:0007669"/>
    <property type="project" value="UniProtKB-UniRule"/>
</dbReference>
<dbReference type="GO" id="GO:0043043">
    <property type="term" value="P:peptide biosynthetic process"/>
    <property type="evidence" value="ECO:0007669"/>
    <property type="project" value="InterPro"/>
</dbReference>
<dbReference type="CDD" id="cd04470">
    <property type="entry name" value="S1_EF-P_repeat_1"/>
    <property type="match status" value="1"/>
</dbReference>
<dbReference type="CDD" id="cd05794">
    <property type="entry name" value="S1_EF-P_repeat_2"/>
    <property type="match status" value="1"/>
</dbReference>
<dbReference type="FunFam" id="2.30.30.30:FF:000003">
    <property type="entry name" value="Elongation factor P"/>
    <property type="match status" value="1"/>
</dbReference>
<dbReference type="FunFam" id="2.40.50.140:FF:000004">
    <property type="entry name" value="Elongation factor P"/>
    <property type="match status" value="1"/>
</dbReference>
<dbReference type="FunFam" id="2.40.50.140:FF:000009">
    <property type="entry name" value="Elongation factor P"/>
    <property type="match status" value="1"/>
</dbReference>
<dbReference type="Gene3D" id="2.30.30.30">
    <property type="match status" value="1"/>
</dbReference>
<dbReference type="Gene3D" id="2.40.50.140">
    <property type="entry name" value="Nucleic acid-binding proteins"/>
    <property type="match status" value="2"/>
</dbReference>
<dbReference type="HAMAP" id="MF_00141">
    <property type="entry name" value="EF_P"/>
    <property type="match status" value="1"/>
</dbReference>
<dbReference type="InterPro" id="IPR015365">
    <property type="entry name" value="Elong-fact-P_C"/>
</dbReference>
<dbReference type="InterPro" id="IPR012340">
    <property type="entry name" value="NA-bd_OB-fold"/>
</dbReference>
<dbReference type="InterPro" id="IPR014722">
    <property type="entry name" value="Rib_uL2_dom2"/>
</dbReference>
<dbReference type="InterPro" id="IPR020599">
    <property type="entry name" value="Transl_elong_fac_P/YeiP"/>
</dbReference>
<dbReference type="InterPro" id="IPR013185">
    <property type="entry name" value="Transl_elong_KOW-like"/>
</dbReference>
<dbReference type="InterPro" id="IPR001059">
    <property type="entry name" value="Transl_elong_P/YeiP_cen"/>
</dbReference>
<dbReference type="InterPro" id="IPR013852">
    <property type="entry name" value="Transl_elong_P/YeiP_CS"/>
</dbReference>
<dbReference type="InterPro" id="IPR011768">
    <property type="entry name" value="Transl_elongation_fac_P"/>
</dbReference>
<dbReference type="InterPro" id="IPR008991">
    <property type="entry name" value="Translation_prot_SH3-like_sf"/>
</dbReference>
<dbReference type="NCBIfam" id="TIGR00038">
    <property type="entry name" value="efp"/>
    <property type="match status" value="1"/>
</dbReference>
<dbReference type="NCBIfam" id="NF001810">
    <property type="entry name" value="PRK00529.1"/>
    <property type="match status" value="1"/>
</dbReference>
<dbReference type="PANTHER" id="PTHR30053">
    <property type="entry name" value="ELONGATION FACTOR P"/>
    <property type="match status" value="1"/>
</dbReference>
<dbReference type="PANTHER" id="PTHR30053:SF12">
    <property type="entry name" value="ELONGATION FACTOR P (EF-P) FAMILY PROTEIN"/>
    <property type="match status" value="1"/>
</dbReference>
<dbReference type="Pfam" id="PF01132">
    <property type="entry name" value="EFP"/>
    <property type="match status" value="1"/>
</dbReference>
<dbReference type="Pfam" id="PF08207">
    <property type="entry name" value="EFP_N"/>
    <property type="match status" value="1"/>
</dbReference>
<dbReference type="Pfam" id="PF09285">
    <property type="entry name" value="Elong-fact-P_C"/>
    <property type="match status" value="1"/>
</dbReference>
<dbReference type="PIRSF" id="PIRSF005901">
    <property type="entry name" value="EF-P"/>
    <property type="match status" value="1"/>
</dbReference>
<dbReference type="SMART" id="SM01185">
    <property type="entry name" value="EFP"/>
    <property type="match status" value="1"/>
</dbReference>
<dbReference type="SMART" id="SM00841">
    <property type="entry name" value="Elong-fact-P_C"/>
    <property type="match status" value="1"/>
</dbReference>
<dbReference type="SUPFAM" id="SSF50249">
    <property type="entry name" value="Nucleic acid-binding proteins"/>
    <property type="match status" value="2"/>
</dbReference>
<dbReference type="SUPFAM" id="SSF50104">
    <property type="entry name" value="Translation proteins SH3-like domain"/>
    <property type="match status" value="1"/>
</dbReference>
<dbReference type="PROSITE" id="PS01275">
    <property type="entry name" value="EFP"/>
    <property type="match status" value="1"/>
</dbReference>
<keyword id="KW-0963">Cytoplasm</keyword>
<keyword id="KW-0251">Elongation factor</keyword>
<keyword id="KW-0379">Hydroxylation</keyword>
<keyword id="KW-0648">Protein biosynthesis</keyword>
<organism>
    <name type="scientific">Salmonella typhi</name>
    <dbReference type="NCBI Taxonomy" id="90370"/>
    <lineage>
        <taxon>Bacteria</taxon>
        <taxon>Pseudomonadati</taxon>
        <taxon>Pseudomonadota</taxon>
        <taxon>Gammaproteobacteria</taxon>
        <taxon>Enterobacterales</taxon>
        <taxon>Enterobacteriaceae</taxon>
        <taxon>Salmonella</taxon>
    </lineage>
</organism>
<feature type="initiator methionine" description="Removed" evidence="1">
    <location>
        <position position="1"/>
    </location>
</feature>
<feature type="chain" id="PRO_0000094324" description="Elongation factor P">
    <location>
        <begin position="2"/>
        <end position="188"/>
    </location>
</feature>
<feature type="modified residue" description="N6-(3,6-diaminohexanoyl)-5-hydroxylysine" evidence="2">
    <location>
        <position position="34"/>
    </location>
</feature>